<reference key="1">
    <citation type="journal article" date="2001" name="Proc. Natl. Acad. Sci. U.S.A.">
        <title>Complete genome sequence of an M1 strain of Streptococcus pyogenes.</title>
        <authorList>
            <person name="Ferretti J.J."/>
            <person name="McShan W.M."/>
            <person name="Ajdic D.J."/>
            <person name="Savic D.J."/>
            <person name="Savic G."/>
            <person name="Lyon K."/>
            <person name="Primeaux C."/>
            <person name="Sezate S."/>
            <person name="Suvorov A.N."/>
            <person name="Kenton S."/>
            <person name="Lai H.S."/>
            <person name="Lin S.P."/>
            <person name="Qian Y."/>
            <person name="Jia H.G."/>
            <person name="Najar F.Z."/>
            <person name="Ren Q."/>
            <person name="Zhu H."/>
            <person name="Song L."/>
            <person name="White J."/>
            <person name="Yuan X."/>
            <person name="Clifton S.W."/>
            <person name="Roe B.A."/>
            <person name="McLaughlin R.E."/>
        </authorList>
    </citation>
    <scope>NUCLEOTIDE SEQUENCE [LARGE SCALE GENOMIC DNA]</scope>
    <source>
        <strain>ATCC 700294 / SF370 / Serotype M1</strain>
    </source>
</reference>
<reference key="2">
    <citation type="journal article" date="2005" name="J. Infect. Dis.">
        <title>Evolutionary origin and emergence of a highly successful clone of serotype M1 group A Streptococcus involved multiple horizontal gene transfer events.</title>
        <authorList>
            <person name="Sumby P."/>
            <person name="Porcella S.F."/>
            <person name="Madrigal A.G."/>
            <person name="Barbian K.D."/>
            <person name="Virtaneva K."/>
            <person name="Ricklefs S.M."/>
            <person name="Sturdevant D.E."/>
            <person name="Graham M.R."/>
            <person name="Vuopio-Varkila J."/>
            <person name="Hoe N.P."/>
            <person name="Musser J.M."/>
        </authorList>
    </citation>
    <scope>NUCLEOTIDE SEQUENCE [LARGE SCALE GENOMIC DNA]</scope>
    <source>
        <strain>ATCC BAA-947 / MGAS5005 / Serotype M1</strain>
    </source>
</reference>
<reference key="3">
    <citation type="journal article" date="2007" name="Mol. Microbiol.">
        <title>Streptococcus pyogenes pili promote pharyngeal cell adhesion and biofilm formation.</title>
        <authorList>
            <person name="Manetti A.G."/>
            <person name="Zingaretti C."/>
            <person name="Falugi F."/>
            <person name="Capo S."/>
            <person name="Bombaci M."/>
            <person name="Bagnoli F."/>
            <person name="Gambellini G."/>
            <person name="Bensi G."/>
            <person name="Mora M."/>
            <person name="Edwards A.M."/>
            <person name="Musser J.M."/>
            <person name="Graviss E.A."/>
            <person name="Telford J.L."/>
            <person name="Grandi G."/>
            <person name="Margarit I."/>
        </authorList>
    </citation>
    <scope>FUNCTION</scope>
</reference>
<reference key="4">
    <citation type="journal article" date="2007" name="Science">
        <title>Stabilizing isopeptide bonds revealed in Gram-positive bacterial pilus structure.</title>
        <authorList>
            <person name="Kang H.J."/>
            <person name="Coulibaly F."/>
            <person name="Clow F."/>
            <person name="Proft T."/>
            <person name="Baker E.N."/>
        </authorList>
    </citation>
    <scope>X-RAY CRYSTALLOGRAPHY (2.22 ANGSTROMS)</scope>
    <scope>SUBUNIT</scope>
    <scope>CROSS-LINKS</scope>
    <scope>MUTAGENESIS OF GLU-117 AND GLU-258</scope>
</reference>
<sequence>MKLRHLLLTGAALTSFAATTVHGETVVNGAKLTVTKNLDLVNSNALIPNTDFTFKIEPDTTVNEDGNKFKGVALNTPMTKVTYTNSDKGGSNTKTAEFDFSEVTFEKPGVYYYKVTEEKIDKVPGVSYDTTSYTVQVHVLWNEEQQKPVATYIVGYKEGSKVPIQFKNSLDSTTLTVKKKVSGTGGDRSKDFNFGLTLKANQYYKASEKVMIEKTTKGGQAPVQTEASIDQLYHFTLKDGESIKVTNLPVGVDYVVTEDDYKSEKYTTNVEVSPQDGAVKNIAGNSTEQETSTDKDMTITFTNKKDFEVPTGVAMTVAPYIALGIVAVGGALYFVKKKNA</sequence>
<comment type="function">
    <text evidence="2">Major component of the pilus. A stack of the pilin subunits, joined by intermolecular isopeptide bonds, forms the pilus. The pilus is required for bacterial adhesion to host cells, for bacterial aggregation, and for biofilm formation.</text>
</comment>
<comment type="subunit">
    <text evidence="3">Forms columns of about 3-nanometers in diameter of head-to-tail-assembled molecules.</text>
</comment>
<comment type="subcellular location">
    <subcellularLocation>
        <location>Secreted</location>
        <location>Cell wall</location>
        <topology>Peptidoglycan-anchor</topology>
    </subcellularLocation>
    <subcellularLocation>
        <location>Fimbrium</location>
    </subcellularLocation>
    <text>Attached to the cell wall by a peptidoglycan anchor.</text>
</comment>
<comment type="PTM">
    <text>Proteolytically processed and assembled in pili through a transpeptidation reaction catalyzed by the sortase C1. The last pilin subunit is cross-linked to the peptidoglycan.</text>
</comment>
<comment type="similarity">
    <text evidence="4">Belongs to the Streptococcus pilin family.</text>
</comment>
<name>PILIN_STRP1</name>
<proteinExistence type="evidence at protein level"/>
<dbReference type="EMBL" id="AE004092">
    <property type="protein sequence ID" value="AAK33238.1"/>
    <property type="molecule type" value="Genomic_DNA"/>
</dbReference>
<dbReference type="EMBL" id="CP000017">
    <property type="protein sequence ID" value="AAZ50728.1"/>
    <property type="molecule type" value="Genomic_DNA"/>
</dbReference>
<dbReference type="RefSeq" id="NP_268517.1">
    <property type="nucleotide sequence ID" value="NC_002737.2"/>
</dbReference>
<dbReference type="PDB" id="3B2M">
    <property type="method" value="X-ray"/>
    <property type="resolution" value="2.22 A"/>
    <property type="chains" value="A/B/C=18-305"/>
</dbReference>
<dbReference type="PDB" id="3GLD">
    <property type="method" value="X-ray"/>
    <property type="resolution" value="2.03 A"/>
    <property type="chains" value="A/B/C=18-308"/>
</dbReference>
<dbReference type="PDB" id="3GLE">
    <property type="method" value="X-ray"/>
    <property type="resolution" value="2.19 A"/>
    <property type="chains" value="A/B/C=18-308"/>
</dbReference>
<dbReference type="PDBsum" id="3B2M"/>
<dbReference type="PDBsum" id="3GLD"/>
<dbReference type="PDBsum" id="3GLE"/>
<dbReference type="SMR" id="Q9A1S2"/>
<dbReference type="KEGG" id="spy:SPy_0128"/>
<dbReference type="KEGG" id="spz:M5005_Spy0109"/>
<dbReference type="PATRIC" id="fig|160490.10.peg.110"/>
<dbReference type="HOGENOM" id="CLU_787371_0_0_9"/>
<dbReference type="OMA" id="WTVDVYV"/>
<dbReference type="EvolutionaryTrace" id="Q9A1S2"/>
<dbReference type="Proteomes" id="UP000000750">
    <property type="component" value="Chromosome"/>
</dbReference>
<dbReference type="GO" id="GO:0005576">
    <property type="term" value="C:extracellular region"/>
    <property type="evidence" value="ECO:0007669"/>
    <property type="project" value="UniProtKB-KW"/>
</dbReference>
<dbReference type="GO" id="GO:0009289">
    <property type="term" value="C:pilus"/>
    <property type="evidence" value="ECO:0007669"/>
    <property type="project" value="UniProtKB-SubCell"/>
</dbReference>
<dbReference type="Gene3D" id="2.60.40.3050">
    <property type="match status" value="1"/>
</dbReference>
<dbReference type="Gene3D" id="2.60.40.1140">
    <property type="entry name" value="Collagen-binding surface protein Cna, B-type domain"/>
    <property type="match status" value="1"/>
</dbReference>
<dbReference type="InterPro" id="IPR055382">
    <property type="entry name" value="DUF7601"/>
</dbReference>
<dbReference type="InterPro" id="IPR017503">
    <property type="entry name" value="Sortase_SrtB_sig_QVPTGV"/>
</dbReference>
<dbReference type="InterPro" id="IPR022464">
    <property type="entry name" value="Strep_pil_isopept_link"/>
</dbReference>
<dbReference type="InterPro" id="IPR038174">
    <property type="entry name" value="Strep_pil_link_sf"/>
</dbReference>
<dbReference type="NCBIfam" id="TIGR03065">
    <property type="entry name" value="srtB_sig_QVPTGV"/>
    <property type="match status" value="1"/>
</dbReference>
<dbReference type="NCBIfam" id="TIGR03786">
    <property type="entry name" value="strep_pil_rpt"/>
    <property type="match status" value="1"/>
</dbReference>
<dbReference type="Pfam" id="PF24547">
    <property type="entry name" value="DUF7601"/>
    <property type="match status" value="1"/>
</dbReference>
<dbReference type="Pfam" id="PF12892">
    <property type="entry name" value="FctA"/>
    <property type="match status" value="1"/>
</dbReference>
<feature type="signal peptide" evidence="1">
    <location>
        <begin position="1"/>
        <end position="23"/>
    </location>
</feature>
<feature type="chain" id="PRO_0000331363" description="Pilin">
    <location>
        <begin position="24"/>
        <end position="311"/>
    </location>
</feature>
<feature type="propeptide" id="PRO_0000331364" description="Removed by sortase C1" evidence="4">
    <location>
        <begin position="312"/>
        <end position="340"/>
    </location>
</feature>
<feature type="short sequence motif" description="EVPTG sorting signal" evidence="1">
    <location>
        <begin position="308"/>
        <end position="312"/>
    </location>
</feature>
<feature type="site" description="Autocatalyzes isopeptide 36-168 formation">
    <location>
        <position position="117"/>
    </location>
</feature>
<feature type="site" description="Autocatalyzes isopeptide 179-303 formation">
    <location>
        <position position="258"/>
    </location>
</feature>
<feature type="modified residue" description="Pentaglycyl murein peptidoglycan amidated threonine; alternate" evidence="4">
    <location>
        <position position="311"/>
    </location>
</feature>
<feature type="cross-link" description="Isoaspartyl lysine isopeptide (Lys-Asn)">
    <location>
        <begin position="36"/>
        <end position="168"/>
    </location>
</feature>
<feature type="cross-link" description="Threonyl lysine isopeptide (Lys-Thr) (interchain with T-311)">
    <location>
        <position position="161"/>
    </location>
</feature>
<feature type="cross-link" description="Isoaspartyl lysine isopeptide (Lys-Asn)">
    <location>
        <begin position="179"/>
        <end position="303"/>
    </location>
</feature>
<feature type="cross-link" description="Threonyl lysine isopeptide (Thr-Lys) (interchain with K-161); alternate">
    <location>
        <position position="311"/>
    </location>
</feature>
<feature type="mutagenesis site" description="Increased susceptibility to proteolysis." evidence="3">
    <original>E</original>
    <variation>A</variation>
    <location>
        <position position="117"/>
    </location>
</feature>
<feature type="mutagenesis site" description="Increased susceptibility to proteolysis." evidence="3">
    <original>E</original>
    <variation>A</variation>
    <location>
        <position position="258"/>
    </location>
</feature>
<feature type="strand" evidence="5">
    <location>
        <begin position="31"/>
        <end position="42"/>
    </location>
</feature>
<feature type="strand" evidence="5">
    <location>
        <begin position="49"/>
        <end position="58"/>
    </location>
</feature>
<feature type="strand" evidence="5">
    <location>
        <begin position="65"/>
        <end position="70"/>
    </location>
</feature>
<feature type="strand" evidence="5">
    <location>
        <begin position="78"/>
        <end position="83"/>
    </location>
</feature>
<feature type="helix" evidence="5">
    <location>
        <begin position="85"/>
        <end position="87"/>
    </location>
</feature>
<feature type="strand" evidence="5">
    <location>
        <begin position="93"/>
        <end position="99"/>
    </location>
</feature>
<feature type="strand" evidence="5">
    <location>
        <begin position="107"/>
        <end position="117"/>
    </location>
</feature>
<feature type="strand" evidence="5">
    <location>
        <begin position="132"/>
        <end position="142"/>
    </location>
</feature>
<feature type="turn" evidence="5">
    <location>
        <begin position="143"/>
        <end position="146"/>
    </location>
</feature>
<feature type="strand" evidence="5">
    <location>
        <begin position="147"/>
        <end position="157"/>
    </location>
</feature>
<feature type="strand" evidence="5">
    <location>
        <begin position="164"/>
        <end position="170"/>
    </location>
</feature>
<feature type="strand" evidence="5">
    <location>
        <begin position="172"/>
        <end position="183"/>
    </location>
</feature>
<feature type="strand" evidence="5">
    <location>
        <begin position="192"/>
        <end position="198"/>
    </location>
</feature>
<feature type="strand" evidence="6">
    <location>
        <begin position="202"/>
        <end position="204"/>
    </location>
</feature>
<feature type="strand" evidence="5">
    <location>
        <begin position="209"/>
        <end position="215"/>
    </location>
</feature>
<feature type="strand" evidence="5">
    <location>
        <begin position="217"/>
        <end position="219"/>
    </location>
</feature>
<feature type="strand" evidence="5">
    <location>
        <begin position="223"/>
        <end position="228"/>
    </location>
</feature>
<feature type="strand" evidence="5">
    <location>
        <begin position="233"/>
        <end position="237"/>
    </location>
</feature>
<feature type="strand" evidence="5">
    <location>
        <begin position="242"/>
        <end position="249"/>
    </location>
</feature>
<feature type="strand" evidence="5">
    <location>
        <begin position="253"/>
        <end position="258"/>
    </location>
</feature>
<feature type="helix" evidence="5">
    <location>
        <begin position="262"/>
        <end position="264"/>
    </location>
</feature>
<feature type="strand" evidence="5">
    <location>
        <begin position="267"/>
        <end position="274"/>
    </location>
</feature>
<feature type="strand" evidence="5">
    <location>
        <begin position="280"/>
        <end position="286"/>
    </location>
</feature>
<feature type="strand" evidence="5">
    <location>
        <begin position="297"/>
        <end position="304"/>
    </location>
</feature>
<evidence type="ECO:0000255" key="1"/>
<evidence type="ECO:0000269" key="2">
    <source>
    </source>
</evidence>
<evidence type="ECO:0000269" key="3">
    <source>
    </source>
</evidence>
<evidence type="ECO:0000305" key="4"/>
<evidence type="ECO:0007829" key="5">
    <source>
        <dbReference type="PDB" id="3GLD"/>
    </source>
</evidence>
<evidence type="ECO:0007829" key="6">
    <source>
        <dbReference type="PDB" id="3GLE"/>
    </source>
</evidence>
<accession>Q9A1S2</accession>
<accession>Q491J0</accession>
<gene>
    <name type="ordered locus">SPy_0128</name>
    <name type="ordered locus">M5005_Spy0109</name>
</gene>
<organism>
    <name type="scientific">Streptococcus pyogenes serotype M1</name>
    <dbReference type="NCBI Taxonomy" id="301447"/>
    <lineage>
        <taxon>Bacteria</taxon>
        <taxon>Bacillati</taxon>
        <taxon>Bacillota</taxon>
        <taxon>Bacilli</taxon>
        <taxon>Lactobacillales</taxon>
        <taxon>Streptococcaceae</taxon>
        <taxon>Streptococcus</taxon>
    </lineage>
</organism>
<protein>
    <recommendedName>
        <fullName>Pilin</fullName>
    </recommendedName>
    <alternativeName>
        <fullName>Lancefield T antigen</fullName>
    </alternativeName>
    <alternativeName>
        <fullName>Pilus backbone structural protein</fullName>
    </alternativeName>
</protein>
<keyword id="KW-0002">3D-structure</keyword>
<keyword id="KW-0134">Cell wall</keyword>
<keyword id="KW-0281">Fimbrium</keyword>
<keyword id="KW-1017">Isopeptide bond</keyword>
<keyword id="KW-0572">Peptidoglycan-anchor</keyword>
<keyword id="KW-1185">Reference proteome</keyword>
<keyword id="KW-0964">Secreted</keyword>
<keyword id="KW-0732">Signal</keyword>